<dbReference type="EMBL" id="X13826">
    <property type="protein sequence ID" value="CAA32053.1"/>
    <property type="molecule type" value="mRNA"/>
</dbReference>
<dbReference type="PIR" id="S05508">
    <property type="entry name" value="S05508"/>
</dbReference>
<dbReference type="PDB" id="6KAC">
    <property type="method" value="EM"/>
    <property type="resolution" value="2.70 A"/>
    <property type="chains" value="O/o=1-291"/>
</dbReference>
<dbReference type="PDB" id="6KAD">
    <property type="method" value="EM"/>
    <property type="resolution" value="3.40 A"/>
    <property type="chains" value="O/o=1-291"/>
</dbReference>
<dbReference type="PDBsum" id="6KAC"/>
<dbReference type="PDBsum" id="6KAD"/>
<dbReference type="EMDB" id="EMD-9955"/>
<dbReference type="EMDB" id="EMD-9956"/>
<dbReference type="EMDB" id="EMD-9957"/>
<dbReference type="SMR" id="P12853"/>
<dbReference type="PaxDb" id="3055-EDP02283"/>
<dbReference type="ProMEX" id="P12853"/>
<dbReference type="eggNOG" id="ENOG502QRXA">
    <property type="taxonomic scope" value="Eukaryota"/>
</dbReference>
<dbReference type="BioCyc" id="CHLAMY:CHLREDRAFT_130316-MONOMER"/>
<dbReference type="BioCyc" id="MetaCyc:CHLREDRAFT_130316-MONOMER"/>
<dbReference type="GO" id="GO:0009535">
    <property type="term" value="C:chloroplast thylakoid membrane"/>
    <property type="evidence" value="ECO:0007669"/>
    <property type="project" value="UniProtKB-SubCell"/>
</dbReference>
<dbReference type="GO" id="GO:0009654">
    <property type="term" value="C:photosystem II oxygen evolving complex"/>
    <property type="evidence" value="ECO:0007669"/>
    <property type="project" value="InterPro"/>
</dbReference>
<dbReference type="GO" id="GO:0010242">
    <property type="term" value="F:oxygen evolving activity"/>
    <property type="evidence" value="ECO:0007669"/>
    <property type="project" value="InterPro"/>
</dbReference>
<dbReference type="GO" id="GO:0010207">
    <property type="term" value="P:photosystem II assembly"/>
    <property type="evidence" value="ECO:0007669"/>
    <property type="project" value="InterPro"/>
</dbReference>
<dbReference type="GO" id="GO:0042549">
    <property type="term" value="P:photosystem II stabilization"/>
    <property type="evidence" value="ECO:0007669"/>
    <property type="project" value="InterPro"/>
</dbReference>
<dbReference type="FunFam" id="3.30.2050.10:FF:000001">
    <property type="entry name" value="Oxygen-evolving enhancer protein 1, chloroplastic"/>
    <property type="match status" value="1"/>
</dbReference>
<dbReference type="Gene3D" id="3.30.2050.10">
    <property type="entry name" value="photosynthetic oxygen evolving center domain"/>
    <property type="match status" value="1"/>
</dbReference>
<dbReference type="Gene3D" id="2.40.160.30">
    <property type="entry name" value="Photosystem II, cytochrome c-550 precursor"/>
    <property type="match status" value="1"/>
</dbReference>
<dbReference type="InterPro" id="IPR011250">
    <property type="entry name" value="OMP/PagP_b-brl"/>
</dbReference>
<dbReference type="InterPro" id="IPR002628">
    <property type="entry name" value="PsbO"/>
</dbReference>
<dbReference type="PANTHER" id="PTHR34058">
    <property type="entry name" value="OXYGEN-EVOLVING ENHANCER PROTEIN 1-2, CHLOROPLASTIC"/>
    <property type="match status" value="1"/>
</dbReference>
<dbReference type="Pfam" id="PF01716">
    <property type="entry name" value="MSP"/>
    <property type="match status" value="1"/>
</dbReference>
<dbReference type="SUPFAM" id="SSF56925">
    <property type="entry name" value="OMPA-like"/>
    <property type="match status" value="1"/>
</dbReference>
<accession>P12853</accession>
<feature type="transit peptide" description="Chloroplast">
    <location>
        <begin position="1"/>
        <end position="52"/>
    </location>
</feature>
<feature type="chain" id="PRO_0000029555" description="Oxygen-evolving enhancer protein 1, chloroplastic">
    <location>
        <begin position="53"/>
        <end position="291"/>
    </location>
</feature>
<feature type="helix" evidence="3">
    <location>
        <begin position="54"/>
        <end position="58"/>
    </location>
</feature>
<feature type="helix" evidence="3">
    <location>
        <begin position="62"/>
        <end position="65"/>
    </location>
</feature>
<feature type="helix" evidence="3">
    <location>
        <begin position="70"/>
        <end position="72"/>
    </location>
</feature>
<feature type="strand" evidence="3">
    <location>
        <begin position="79"/>
        <end position="81"/>
    </location>
</feature>
<feature type="strand" evidence="3">
    <location>
        <begin position="90"/>
        <end position="108"/>
    </location>
</feature>
<feature type="strand" evidence="3">
    <location>
        <begin position="111"/>
        <end position="114"/>
    </location>
</feature>
<feature type="strand" evidence="3">
    <location>
        <begin position="118"/>
        <end position="121"/>
    </location>
</feature>
<feature type="strand" evidence="3">
    <location>
        <begin position="132"/>
        <end position="141"/>
    </location>
</feature>
<feature type="strand" evidence="3">
    <location>
        <begin position="143"/>
        <end position="155"/>
    </location>
</feature>
<feature type="strand" evidence="3">
    <location>
        <begin position="159"/>
        <end position="163"/>
    </location>
</feature>
<feature type="strand" evidence="3">
    <location>
        <begin position="169"/>
        <end position="173"/>
    </location>
</feature>
<feature type="strand" evidence="3">
    <location>
        <begin position="180"/>
        <end position="184"/>
    </location>
</feature>
<feature type="strand" evidence="3">
    <location>
        <begin position="190"/>
        <end position="194"/>
    </location>
</feature>
<feature type="strand" evidence="3">
    <location>
        <begin position="209"/>
        <end position="213"/>
    </location>
</feature>
<feature type="strand" evidence="3">
    <location>
        <begin position="220"/>
        <end position="226"/>
    </location>
</feature>
<feature type="turn" evidence="3">
    <location>
        <begin position="227"/>
        <end position="233"/>
    </location>
</feature>
<feature type="strand" evidence="3">
    <location>
        <begin position="240"/>
        <end position="252"/>
    </location>
</feature>
<feature type="turn" evidence="3">
    <location>
        <begin position="253"/>
        <end position="256"/>
    </location>
</feature>
<feature type="strand" evidence="3">
    <location>
        <begin position="257"/>
        <end position="267"/>
    </location>
</feature>
<feature type="turn" evidence="3">
    <location>
        <begin position="271"/>
        <end position="274"/>
    </location>
</feature>
<feature type="strand" evidence="3">
    <location>
        <begin position="279"/>
        <end position="290"/>
    </location>
</feature>
<gene>
    <name type="primary">PSBO</name>
</gene>
<reference key="1">
    <citation type="journal article" date="1989" name="Plant Mol. Biol.">
        <title>Analysis of the genes of the OEE1 and OEE3 proteins of the photosystem II complex of Chlamydomonas reinhardtii.</title>
        <authorList>
            <person name="Mayfield S.P."/>
            <person name="Schirmer-Rahire G."/>
            <person name="Frank H."/>
            <person name="Zuber H."/>
            <person name="Rochaix J.-D."/>
        </authorList>
    </citation>
    <scope>NUCLEOTIDE SEQUENCE [MRNA]</scope>
    <source>
        <strain>137c / CC-125</strain>
    </source>
</reference>
<protein>
    <recommendedName>
        <fullName>Oxygen-evolving enhancer protein 1, chloroplastic</fullName>
        <shortName>OEE1</shortName>
    </recommendedName>
</protein>
<comment type="function">
    <text evidence="1">Stabilizes the manganese cluster which is the primary site of water splitting.</text>
</comment>
<comment type="subcellular location">
    <subcellularLocation>
        <location>Plastid</location>
        <location>Chloroplast thylakoid membrane</location>
    </subcellularLocation>
    <text>Associated with the photosystem II complex.</text>
</comment>
<comment type="similarity">
    <text evidence="2">Belongs to the PsbO family.</text>
</comment>
<name>PSBO_CHLRE</name>
<proteinExistence type="evidence at protein level"/>
<organism>
    <name type="scientific">Chlamydomonas reinhardtii</name>
    <name type="common">Chlamydomonas smithii</name>
    <dbReference type="NCBI Taxonomy" id="3055"/>
    <lineage>
        <taxon>Eukaryota</taxon>
        <taxon>Viridiplantae</taxon>
        <taxon>Chlorophyta</taxon>
        <taxon>core chlorophytes</taxon>
        <taxon>Chlorophyceae</taxon>
        <taxon>CS clade</taxon>
        <taxon>Chlamydomonadales</taxon>
        <taxon>Chlamydomonadaceae</taxon>
        <taxon>Chlamydomonas</taxon>
    </lineage>
</organism>
<evidence type="ECO:0000250" key="1"/>
<evidence type="ECO:0000305" key="2"/>
<evidence type="ECO:0007829" key="3">
    <source>
        <dbReference type="PDB" id="6KAC"/>
    </source>
</evidence>
<keyword id="KW-0002">3D-structure</keyword>
<keyword id="KW-0150">Chloroplast</keyword>
<keyword id="KW-0464">Manganese</keyword>
<keyword id="KW-0472">Membrane</keyword>
<keyword id="KW-0602">Photosynthesis</keyword>
<keyword id="KW-0604">Photosystem II</keyword>
<keyword id="KW-0934">Plastid</keyword>
<keyword id="KW-0793">Thylakoid</keyword>
<keyword id="KW-0809">Transit peptide</keyword>
<sequence length="291" mass="30523">MALRAAQSAKAGVRAARPNRATAVVCKAQKVGQAAAAAALATAMVAGSANALTFDEIQGLTYLQVKGSGIANTCPVLESGTTNLKELKAGSYKLENFCIEPTSFTVKEESQFKGGETEFVKTKLMTRLTYTLDAMSGSFKVGSDGSAELKEDDGIDYAATTVQLPGGERVAFLFTIKQFDGKGTLDGIKGDFLVPSYRGSSFLDPKGRGGSTGYDNAVALPARADAEELLKENVKITKALKGSAVFSVAKVDPVTGEIAGVFESIQPSDTDLGAKPPKDIKVTGLWYAQLK</sequence>